<protein>
    <recommendedName>
        <fullName>Uncharacterized protein MJECL01</fullName>
    </recommendedName>
</protein>
<geneLocation type="plasmid">
    <name>large ECE</name>
</geneLocation>
<proteinExistence type="predicted"/>
<reference key="1">
    <citation type="journal article" date="1996" name="Science">
        <title>Complete genome sequence of the methanogenic archaeon, Methanococcus jannaschii.</title>
        <authorList>
            <person name="Bult C.J."/>
            <person name="White O."/>
            <person name="Olsen G.J."/>
            <person name="Zhou L."/>
            <person name="Fleischmann R.D."/>
            <person name="Sutton G.G."/>
            <person name="Blake J.A."/>
            <person name="FitzGerald L.M."/>
            <person name="Clayton R.A."/>
            <person name="Gocayne J.D."/>
            <person name="Kerlavage A.R."/>
            <person name="Dougherty B.A."/>
            <person name="Tomb J.-F."/>
            <person name="Adams M.D."/>
            <person name="Reich C.I."/>
            <person name="Overbeek R."/>
            <person name="Kirkness E.F."/>
            <person name="Weinstock K.G."/>
            <person name="Merrick J.M."/>
            <person name="Glodek A."/>
            <person name="Scott J.L."/>
            <person name="Geoghagen N.S.M."/>
            <person name="Weidman J.F."/>
            <person name="Fuhrmann J.L."/>
            <person name="Nguyen D."/>
            <person name="Utterback T.R."/>
            <person name="Kelley J.M."/>
            <person name="Peterson J.D."/>
            <person name="Sadow P.W."/>
            <person name="Hanna M.C."/>
            <person name="Cotton M.D."/>
            <person name="Roberts K.M."/>
            <person name="Hurst M.A."/>
            <person name="Kaine B.P."/>
            <person name="Borodovsky M."/>
            <person name="Klenk H.-P."/>
            <person name="Fraser C.M."/>
            <person name="Smith H.O."/>
            <person name="Woese C.R."/>
            <person name="Venter J.C."/>
        </authorList>
    </citation>
    <scope>NUCLEOTIDE SEQUENCE [LARGE SCALE GENOMIC DNA]</scope>
    <source>
        <strain>ATCC 43067 / DSM 2661 / JAL-1 / JCM 10045 / NBRC 100440</strain>
    </source>
</reference>
<organism>
    <name type="scientific">Methanocaldococcus jannaschii (strain ATCC 43067 / DSM 2661 / JAL-1 / JCM 10045 / NBRC 100440)</name>
    <name type="common">Methanococcus jannaschii</name>
    <dbReference type="NCBI Taxonomy" id="243232"/>
    <lineage>
        <taxon>Archaea</taxon>
        <taxon>Methanobacteriati</taxon>
        <taxon>Methanobacteriota</taxon>
        <taxon>Methanomada group</taxon>
        <taxon>Methanococci</taxon>
        <taxon>Methanococcales</taxon>
        <taxon>Methanocaldococcaceae</taxon>
        <taxon>Methanocaldococcus</taxon>
    </lineage>
</organism>
<keyword id="KW-0614">Plasmid</keyword>
<keyword id="KW-1185">Reference proteome</keyword>
<feature type="chain" id="PRO_0000107493" description="Uncharacterized protein MJECL01">
    <location>
        <begin position="1"/>
        <end position="249"/>
    </location>
</feature>
<sequence length="249" mass="29998">MMGEQLDYLLNIVKNDKKFLETLKNMKIDVDSDEELSKIFFIIITFPFWLRCHDDIKNALRLIDKITNKGSFTKVLDNSMKEYHVFYIYDVDKLSDLIAEELKRLYLICKSEGKSYYENIFFRLDRKSILKLFMKISPFKQLDVIKGKLKNQLDFFEEYFNNIEKIGYFSIRMENSRYNEHIKSLHPKLIISLRVDKVHIRLEAQIDYYNINNENEEAYKKILELMKLNLLTIGYKAVEKFLEEIYEEV</sequence>
<name>Y3501_METJA</name>
<dbReference type="EMBL" id="L77118">
    <property type="protein sequence ID" value="AAC37075.1"/>
    <property type="molecule type" value="Genomic_DNA"/>
</dbReference>
<dbReference type="PIR" id="A64510">
    <property type="entry name" value="A64510"/>
</dbReference>
<dbReference type="PaxDb" id="243232-MJ_ECL01"/>
<dbReference type="EnsemblBacteria" id="AAC37075">
    <property type="protein sequence ID" value="AAC37075"/>
    <property type="gene ID" value="MJ_ECL01"/>
</dbReference>
<dbReference type="KEGG" id="mja:MJ_ECL01"/>
<dbReference type="eggNOG" id="arCOG00877">
    <property type="taxonomic scope" value="Archaea"/>
</dbReference>
<dbReference type="HOGENOM" id="CLU_1113870_0_0_2"/>
<dbReference type="InParanoid" id="Q60266"/>
<dbReference type="OrthoDB" id="11644at2157"/>
<dbReference type="Proteomes" id="UP000000805">
    <property type="component" value="Plasmid pDSM2661_1"/>
</dbReference>
<gene>
    <name type="ordered locus">MJECL01</name>
</gene>
<accession>Q60266</accession>